<name>CLPP_ORYSI</name>
<organism>
    <name type="scientific">Oryza sativa subsp. indica</name>
    <name type="common">Rice</name>
    <dbReference type="NCBI Taxonomy" id="39946"/>
    <lineage>
        <taxon>Eukaryota</taxon>
        <taxon>Viridiplantae</taxon>
        <taxon>Streptophyta</taxon>
        <taxon>Embryophyta</taxon>
        <taxon>Tracheophyta</taxon>
        <taxon>Spermatophyta</taxon>
        <taxon>Magnoliopsida</taxon>
        <taxon>Liliopsida</taxon>
        <taxon>Poales</taxon>
        <taxon>Poaceae</taxon>
        <taxon>BOP clade</taxon>
        <taxon>Oryzoideae</taxon>
        <taxon>Oryzeae</taxon>
        <taxon>Oryzinae</taxon>
        <taxon>Oryza</taxon>
        <taxon>Oryza sativa</taxon>
    </lineage>
</organism>
<keyword id="KW-0150">Chloroplast</keyword>
<keyword id="KW-0378">Hydrolase</keyword>
<keyword id="KW-0934">Plastid</keyword>
<keyword id="KW-0645">Protease</keyword>
<keyword id="KW-1185">Reference proteome</keyword>
<keyword id="KW-0720">Serine protease</keyword>
<dbReference type="EC" id="3.4.21.92" evidence="1"/>
<dbReference type="EMBL" id="AY522329">
    <property type="protein sequence ID" value="AAS46070.1"/>
    <property type="molecule type" value="Genomic_DNA"/>
</dbReference>
<dbReference type="RefSeq" id="YP_009161388.1">
    <property type="nucleotide sequence ID" value="NC_027678.1"/>
</dbReference>
<dbReference type="RefSeq" id="YP_654230.1">
    <property type="nucleotide sequence ID" value="NC_008155.1"/>
</dbReference>
<dbReference type="SMR" id="P0C313"/>
<dbReference type="STRING" id="39946.P0C313"/>
<dbReference type="MEROPS" id="S14.002"/>
<dbReference type="GeneID" id="4126873"/>
<dbReference type="Proteomes" id="UP000007015">
    <property type="component" value="Chloroplast"/>
</dbReference>
<dbReference type="GO" id="GO:0009570">
    <property type="term" value="C:chloroplast stroma"/>
    <property type="evidence" value="ECO:0007669"/>
    <property type="project" value="UniProtKB-SubCell"/>
</dbReference>
<dbReference type="GO" id="GO:0009536">
    <property type="term" value="C:plastid"/>
    <property type="evidence" value="ECO:0000305"/>
    <property type="project" value="Gramene"/>
</dbReference>
<dbReference type="GO" id="GO:0004176">
    <property type="term" value="F:ATP-dependent peptidase activity"/>
    <property type="evidence" value="ECO:0007669"/>
    <property type="project" value="InterPro"/>
</dbReference>
<dbReference type="GO" id="GO:0004252">
    <property type="term" value="F:serine-type endopeptidase activity"/>
    <property type="evidence" value="ECO:0007669"/>
    <property type="project" value="UniProtKB-UniRule"/>
</dbReference>
<dbReference type="GO" id="GO:0006508">
    <property type="term" value="P:proteolysis"/>
    <property type="evidence" value="ECO:0007669"/>
    <property type="project" value="UniProtKB-UniRule"/>
</dbReference>
<dbReference type="CDD" id="cd07017">
    <property type="entry name" value="S14_ClpP_2"/>
    <property type="match status" value="1"/>
</dbReference>
<dbReference type="FunFam" id="3.90.226.10:FF:000006">
    <property type="entry name" value="ATP-dependent Clp protease proteolytic subunit"/>
    <property type="match status" value="1"/>
</dbReference>
<dbReference type="Gene3D" id="3.90.226.10">
    <property type="entry name" value="2-enoyl-CoA Hydratase, Chain A, domain 1"/>
    <property type="match status" value="1"/>
</dbReference>
<dbReference type="HAMAP" id="MF_00444">
    <property type="entry name" value="ClpP"/>
    <property type="match status" value="1"/>
</dbReference>
<dbReference type="InterPro" id="IPR001907">
    <property type="entry name" value="ClpP"/>
</dbReference>
<dbReference type="InterPro" id="IPR029045">
    <property type="entry name" value="ClpP/crotonase-like_dom_sf"/>
</dbReference>
<dbReference type="InterPro" id="IPR023562">
    <property type="entry name" value="ClpP/TepA"/>
</dbReference>
<dbReference type="InterPro" id="IPR033135">
    <property type="entry name" value="ClpP_His_AS"/>
</dbReference>
<dbReference type="InterPro" id="IPR018215">
    <property type="entry name" value="ClpP_Ser_AS"/>
</dbReference>
<dbReference type="PANTHER" id="PTHR48481">
    <property type="entry name" value="ATP-DEPENDENT CLP PROTEASE PROTEOLYTIC SUBUNIT"/>
    <property type="match status" value="1"/>
</dbReference>
<dbReference type="PANTHER" id="PTHR48481:SF1">
    <property type="entry name" value="ATP-DEPENDENT CLP PROTEASE PROTEOLYTIC SUBUNIT"/>
    <property type="match status" value="1"/>
</dbReference>
<dbReference type="Pfam" id="PF00574">
    <property type="entry name" value="CLP_protease"/>
    <property type="match status" value="1"/>
</dbReference>
<dbReference type="PRINTS" id="PR00127">
    <property type="entry name" value="CLPPROTEASEP"/>
</dbReference>
<dbReference type="SUPFAM" id="SSF52096">
    <property type="entry name" value="ClpP/crotonase"/>
    <property type="match status" value="1"/>
</dbReference>
<dbReference type="PROSITE" id="PS00382">
    <property type="entry name" value="CLP_PROTEASE_HIS"/>
    <property type="match status" value="1"/>
</dbReference>
<dbReference type="PROSITE" id="PS00381">
    <property type="entry name" value="CLP_PROTEASE_SER"/>
    <property type="match status" value="1"/>
</dbReference>
<accession>P0C313</accession>
<accession>P12209</accession>
<accession>Q6QXZ5</accession>
<accession>Q6QY59</accession>
<reference key="1">
    <citation type="journal article" date="2004" name="Plant Physiol.">
        <title>A comparison of rice chloroplast genomes.</title>
        <authorList>
            <person name="Tang J."/>
            <person name="Xia H."/>
            <person name="Cao M."/>
            <person name="Zhang X."/>
            <person name="Zeng W."/>
            <person name="Hu S."/>
            <person name="Tong W."/>
            <person name="Wang J."/>
            <person name="Wang J."/>
            <person name="Yu J."/>
            <person name="Yang H."/>
            <person name="Zhu L."/>
        </authorList>
    </citation>
    <scope>NUCLEOTIDE SEQUENCE [LARGE SCALE GENOMIC DNA]</scope>
    <source>
        <strain>cv. 93-11</strain>
    </source>
</reference>
<proteinExistence type="inferred from homology"/>
<feature type="chain" id="PRO_0000288626" description="ATP-dependent Clp protease proteolytic subunit">
    <location>
        <begin position="1"/>
        <end position="216"/>
    </location>
</feature>
<feature type="active site" description="Nucleophile" evidence="1">
    <location>
        <position position="101"/>
    </location>
</feature>
<feature type="active site" evidence="1">
    <location>
        <position position="126"/>
    </location>
</feature>
<gene>
    <name evidence="1" type="primary">clpP</name>
    <name type="ORF">9311087</name>
</gene>
<protein>
    <recommendedName>
        <fullName evidence="1">ATP-dependent Clp protease proteolytic subunit</fullName>
        <ecNumber evidence="1">3.4.21.92</ecNumber>
    </recommendedName>
    <alternativeName>
        <fullName evidence="1">Endopeptidase Clp</fullName>
    </alternativeName>
</protein>
<comment type="function">
    <text evidence="1">Cleaves peptides in various proteins in a process that requires ATP hydrolysis. Has a chymotrypsin-like activity. Plays a major role in the degradation of misfolded proteins.</text>
</comment>
<comment type="catalytic activity">
    <reaction evidence="1">
        <text>Hydrolysis of proteins to small peptides in the presence of ATP and magnesium. alpha-casein is the usual test substrate. In the absence of ATP, only oligopeptides shorter than five residues are hydrolyzed (such as succinyl-Leu-Tyr-|-NHMec, and Leu-Tyr-Leu-|-Tyr-Trp, in which cleavage of the -Tyr-|-Leu- and -Tyr-|-Trp bonds also occurs).</text>
        <dbReference type="EC" id="3.4.21.92"/>
    </reaction>
</comment>
<comment type="subunit">
    <text>Component of the chloroplastic Clp protease core complex.</text>
</comment>
<comment type="subcellular location">
    <subcellularLocation>
        <location evidence="1">Plastid</location>
        <location evidence="1">Chloroplast stroma</location>
    </subcellularLocation>
</comment>
<comment type="similarity">
    <text evidence="1">Belongs to the peptidase S14 family.</text>
</comment>
<sequence length="216" mass="24728">MPIGVPKVPYRIPGDEEATWVDLYNVMYRERTLFLGQEIRCEVTNHITGLMVYLSIEDGISDIFLFINSPGGWLISGMAIFDTMQTVTPDIYTICLGIAASMASFILLGGEPTKRIAFPHARIMLHQPASAYYRARTPEFLLEVEELHKVREMITRVYALRTGKPFWVVSEDMERDVFMSADEAKAYGLVDIVGDEMLDEHCDTDPVWFPEMFKDW</sequence>
<evidence type="ECO:0000255" key="1">
    <source>
        <dbReference type="HAMAP-Rule" id="MF_00444"/>
    </source>
</evidence>
<geneLocation type="chloroplast"/>